<feature type="signal peptide" evidence="1">
    <location>
        <begin position="1"/>
        <end position="21"/>
    </location>
</feature>
<feature type="chain" id="PRO_0000420997" description="Alpha-elapitoxin-Oh2a">
    <location>
        <begin position="22"/>
        <end position="93"/>
    </location>
</feature>
<feature type="disulfide bond" evidence="1">
    <location>
        <begin position="24"/>
        <end position="43"/>
    </location>
</feature>
<feature type="disulfide bond" evidence="1">
    <location>
        <begin position="36"/>
        <end position="64"/>
    </location>
</feature>
<feature type="disulfide bond" evidence="1">
    <location>
        <begin position="49"/>
        <end position="53"/>
    </location>
</feature>
<feature type="disulfide bond" evidence="1">
    <location>
        <begin position="68"/>
        <end position="79"/>
    </location>
</feature>
<feature type="disulfide bond" evidence="1">
    <location>
        <begin position="80"/>
        <end position="85"/>
    </location>
</feature>
<name>3L22A_OPHHA</name>
<evidence type="ECO:0000250" key="1"/>
<evidence type="ECO:0000250" key="2">
    <source>
        <dbReference type="UniProtKB" id="P60615"/>
    </source>
</evidence>
<evidence type="ECO:0000305" key="3"/>
<accession>C5ILC5</accession>
<dbReference type="EMBL" id="FJ952515">
    <property type="protein sequence ID" value="ACR55626.1"/>
    <property type="molecule type" value="mRNA"/>
</dbReference>
<dbReference type="SMR" id="C5ILC5"/>
<dbReference type="GO" id="GO:0005576">
    <property type="term" value="C:extracellular region"/>
    <property type="evidence" value="ECO:0007669"/>
    <property type="project" value="UniProtKB-SubCell"/>
</dbReference>
<dbReference type="GO" id="GO:0030550">
    <property type="term" value="F:acetylcholine receptor inhibitor activity"/>
    <property type="evidence" value="ECO:0007669"/>
    <property type="project" value="UniProtKB-KW"/>
</dbReference>
<dbReference type="GO" id="GO:0099106">
    <property type="term" value="F:ion channel regulator activity"/>
    <property type="evidence" value="ECO:0007669"/>
    <property type="project" value="UniProtKB-KW"/>
</dbReference>
<dbReference type="GO" id="GO:0090729">
    <property type="term" value="F:toxin activity"/>
    <property type="evidence" value="ECO:0007669"/>
    <property type="project" value="UniProtKB-KW"/>
</dbReference>
<dbReference type="CDD" id="cd00206">
    <property type="entry name" value="TFP_snake_toxin"/>
    <property type="match status" value="1"/>
</dbReference>
<dbReference type="Gene3D" id="2.10.60.10">
    <property type="entry name" value="CD59"/>
    <property type="match status" value="1"/>
</dbReference>
<dbReference type="InterPro" id="IPR003571">
    <property type="entry name" value="Snake_3FTx"/>
</dbReference>
<dbReference type="InterPro" id="IPR045860">
    <property type="entry name" value="Snake_toxin-like_sf"/>
</dbReference>
<dbReference type="InterPro" id="IPR018354">
    <property type="entry name" value="Snake_toxin_con_site"/>
</dbReference>
<dbReference type="InterPro" id="IPR054131">
    <property type="entry name" value="Toxin_cobra-type"/>
</dbReference>
<dbReference type="Pfam" id="PF21947">
    <property type="entry name" value="Toxin_cobra-type"/>
    <property type="match status" value="1"/>
</dbReference>
<dbReference type="SUPFAM" id="SSF57302">
    <property type="entry name" value="Snake toxin-like"/>
    <property type="match status" value="1"/>
</dbReference>
<dbReference type="PROSITE" id="PS00272">
    <property type="entry name" value="SNAKE_TOXIN"/>
    <property type="match status" value="1"/>
</dbReference>
<reference key="1">
    <citation type="submission" date="2009-04" db="EMBL/GenBank/DDBJ databases">
        <title>Cloning of the neuromuscular blocking compound from the venom of king cobra (Ophiophagus hannah).</title>
        <authorList>
            <person name="Suntrarachun S."/>
            <person name="Khunsap S."/>
            <person name="Tirawatnapong T."/>
            <person name="Thamaree S."/>
        </authorList>
    </citation>
    <scope>NUCLEOTIDE SEQUENCE [MRNA]</scope>
    <source>
        <tissue>Venom gland</tissue>
    </source>
</reference>
<keyword id="KW-0008">Acetylcholine receptor inhibiting toxin</keyword>
<keyword id="KW-1015">Disulfide bond</keyword>
<keyword id="KW-0872">Ion channel impairing toxin</keyword>
<keyword id="KW-0528">Neurotoxin</keyword>
<keyword id="KW-0629">Postsynaptic neurotoxin</keyword>
<keyword id="KW-0964">Secreted</keyword>
<keyword id="KW-0732">Signal</keyword>
<keyword id="KW-0800">Toxin</keyword>
<sequence length="93" mass="10260">MKTLLLTLVVVTIVCLDLGYTLLCYKTPSPINAETCPPGENLCYTKMWCDAWCSSRGKVIELGCAATCPSKKPYEEVDCCSTDNCNPHPKLRP</sequence>
<comment type="function">
    <text evidence="2">Binds with high affinity to muscular (alpha-1/CHRNA1) and neuronal (alpha-7/CHRNA7) nicotinic acetylcholine receptor (nAChR) and inhibits acetylcholine from binding to the receptor, thereby impairing neuromuscular and neuronal transmission.</text>
</comment>
<comment type="subcellular location">
    <subcellularLocation>
        <location evidence="1">Secreted</location>
    </subcellularLocation>
</comment>
<comment type="tissue specificity">
    <text evidence="3">Expressed by the venom gland.</text>
</comment>
<comment type="similarity">
    <text evidence="3">Belongs to the three-finger toxin family. Long-chain subfamily. Type II alpha-neurotoxin sub-subfamily.</text>
</comment>
<organism>
    <name type="scientific">Ophiophagus hannah</name>
    <name type="common">King cobra</name>
    <name type="synonym">Naja hannah</name>
    <dbReference type="NCBI Taxonomy" id="8665"/>
    <lineage>
        <taxon>Eukaryota</taxon>
        <taxon>Metazoa</taxon>
        <taxon>Chordata</taxon>
        <taxon>Craniata</taxon>
        <taxon>Vertebrata</taxon>
        <taxon>Euteleostomi</taxon>
        <taxon>Lepidosauria</taxon>
        <taxon>Squamata</taxon>
        <taxon>Bifurcata</taxon>
        <taxon>Unidentata</taxon>
        <taxon>Episquamata</taxon>
        <taxon>Toxicofera</taxon>
        <taxon>Serpentes</taxon>
        <taxon>Colubroidea</taxon>
        <taxon>Elapidae</taxon>
        <taxon>Elapinae</taxon>
        <taxon>Ophiophagus</taxon>
    </lineage>
</organism>
<proteinExistence type="inferred from homology"/>
<protein>
    <recommendedName>
        <fullName>Alpha-elapitoxin-Oh2a</fullName>
        <shortName>Alpha-EPTX-Oh2a</shortName>
    </recommendedName>
    <alternativeName>
        <fullName>Long chain neurotoxin</fullName>
    </alternativeName>
</protein>